<proteinExistence type="inferred from homology"/>
<feature type="chain" id="PRO_0000261961" description="Nucleotide-binding protein PFL_4775">
    <location>
        <begin position="1"/>
        <end position="161"/>
    </location>
</feature>
<keyword id="KW-0547">Nucleotide-binding</keyword>
<gene>
    <name type="ordered locus">PFL_4775</name>
</gene>
<comment type="function">
    <text evidence="1">Nucleotide-binding protein.</text>
</comment>
<comment type="similarity">
    <text evidence="1">Belongs to the YajQ family.</text>
</comment>
<protein>
    <recommendedName>
        <fullName evidence="1">Nucleotide-binding protein PFL_4775</fullName>
    </recommendedName>
</protein>
<name>Y4775_PSEF5</name>
<organism>
    <name type="scientific">Pseudomonas fluorescens (strain ATCC BAA-477 / NRRL B-23932 / Pf-5)</name>
    <dbReference type="NCBI Taxonomy" id="220664"/>
    <lineage>
        <taxon>Bacteria</taxon>
        <taxon>Pseudomonadati</taxon>
        <taxon>Pseudomonadota</taxon>
        <taxon>Gammaproteobacteria</taxon>
        <taxon>Pseudomonadales</taxon>
        <taxon>Pseudomonadaceae</taxon>
        <taxon>Pseudomonas</taxon>
    </lineage>
</organism>
<dbReference type="EMBL" id="CP000076">
    <property type="protein sequence ID" value="AAY94005.1"/>
    <property type="molecule type" value="Genomic_DNA"/>
</dbReference>
<dbReference type="RefSeq" id="WP_011063029.1">
    <property type="nucleotide sequence ID" value="NC_004129.6"/>
</dbReference>
<dbReference type="SMR" id="Q4K7C7"/>
<dbReference type="STRING" id="220664.PFL_4775"/>
<dbReference type="KEGG" id="pfl:PFL_4775"/>
<dbReference type="PATRIC" id="fig|220664.5.peg.4886"/>
<dbReference type="eggNOG" id="COG1666">
    <property type="taxonomic scope" value="Bacteria"/>
</dbReference>
<dbReference type="HOGENOM" id="CLU_099839_1_0_6"/>
<dbReference type="Proteomes" id="UP000008540">
    <property type="component" value="Chromosome"/>
</dbReference>
<dbReference type="GO" id="GO:0005829">
    <property type="term" value="C:cytosol"/>
    <property type="evidence" value="ECO:0007669"/>
    <property type="project" value="TreeGrafter"/>
</dbReference>
<dbReference type="GO" id="GO:0000166">
    <property type="term" value="F:nucleotide binding"/>
    <property type="evidence" value="ECO:0007669"/>
    <property type="project" value="TreeGrafter"/>
</dbReference>
<dbReference type="CDD" id="cd11740">
    <property type="entry name" value="YajQ_like"/>
    <property type="match status" value="1"/>
</dbReference>
<dbReference type="FunFam" id="3.30.70.860:FF:000001">
    <property type="entry name" value="UPF0234 protein YajQ"/>
    <property type="match status" value="1"/>
</dbReference>
<dbReference type="Gene3D" id="3.30.70.860">
    <property type="match status" value="1"/>
</dbReference>
<dbReference type="Gene3D" id="3.30.70.990">
    <property type="entry name" value="YajQ-like, domain 2"/>
    <property type="match status" value="1"/>
</dbReference>
<dbReference type="HAMAP" id="MF_00632">
    <property type="entry name" value="YajQ"/>
    <property type="match status" value="1"/>
</dbReference>
<dbReference type="InterPro" id="IPR007551">
    <property type="entry name" value="DUF520"/>
</dbReference>
<dbReference type="InterPro" id="IPR035571">
    <property type="entry name" value="UPF0234-like_C"/>
</dbReference>
<dbReference type="InterPro" id="IPR035570">
    <property type="entry name" value="UPF0234_N"/>
</dbReference>
<dbReference type="InterPro" id="IPR036183">
    <property type="entry name" value="YajQ-like_sf"/>
</dbReference>
<dbReference type="NCBIfam" id="NF003819">
    <property type="entry name" value="PRK05412.1"/>
    <property type="match status" value="1"/>
</dbReference>
<dbReference type="PANTHER" id="PTHR30476">
    <property type="entry name" value="UPF0234 PROTEIN YAJQ"/>
    <property type="match status" value="1"/>
</dbReference>
<dbReference type="PANTHER" id="PTHR30476:SF0">
    <property type="entry name" value="UPF0234 PROTEIN YAJQ"/>
    <property type="match status" value="1"/>
</dbReference>
<dbReference type="Pfam" id="PF04461">
    <property type="entry name" value="DUF520"/>
    <property type="match status" value="1"/>
</dbReference>
<dbReference type="SUPFAM" id="SSF89963">
    <property type="entry name" value="YajQ-like"/>
    <property type="match status" value="2"/>
</dbReference>
<accession>Q4K7C7</accession>
<sequence>MPSFDVVSELDKHEVTNAVENAVKELDRRYDLKGKGSFEFKDKELTVNLTAEAEFQLEAMIEILKLALVKRKIDVQCLEVKDAYASGKVMKQEAVLKEGIDKELAKKIVAHIKDAKLKVQAAIQGEQVRVTGKKRDDLQEAIAALRAKEFGMPLQFNNFRD</sequence>
<reference key="1">
    <citation type="journal article" date="2005" name="Nat. Biotechnol.">
        <title>Complete genome sequence of the plant commensal Pseudomonas fluorescens Pf-5.</title>
        <authorList>
            <person name="Paulsen I.T."/>
            <person name="Press C.M."/>
            <person name="Ravel J."/>
            <person name="Kobayashi D.Y."/>
            <person name="Myers G.S.A."/>
            <person name="Mavrodi D.V."/>
            <person name="DeBoy R.T."/>
            <person name="Seshadri R."/>
            <person name="Ren Q."/>
            <person name="Madupu R."/>
            <person name="Dodson R.J."/>
            <person name="Durkin A.S."/>
            <person name="Brinkac L.M."/>
            <person name="Daugherty S.C."/>
            <person name="Sullivan S.A."/>
            <person name="Rosovitz M.J."/>
            <person name="Gwinn M.L."/>
            <person name="Zhou L."/>
            <person name="Schneider D.J."/>
            <person name="Cartinhour S.W."/>
            <person name="Nelson W.C."/>
            <person name="Weidman J."/>
            <person name="Watkins K."/>
            <person name="Tran K."/>
            <person name="Khouri H."/>
            <person name="Pierson E.A."/>
            <person name="Pierson L.S. III"/>
            <person name="Thomashow L.S."/>
            <person name="Loper J.E."/>
        </authorList>
    </citation>
    <scope>NUCLEOTIDE SEQUENCE [LARGE SCALE GENOMIC DNA]</scope>
    <source>
        <strain>ATCC BAA-477 / NRRL B-23932 / Pf-5</strain>
    </source>
</reference>
<evidence type="ECO:0000255" key="1">
    <source>
        <dbReference type="HAMAP-Rule" id="MF_00632"/>
    </source>
</evidence>